<name>RS5_MYCPA</name>
<keyword id="KW-1185">Reference proteome</keyword>
<keyword id="KW-0687">Ribonucleoprotein</keyword>
<keyword id="KW-0689">Ribosomal protein</keyword>
<keyword id="KW-0694">RNA-binding</keyword>
<keyword id="KW-0699">rRNA-binding</keyword>
<feature type="chain" id="PRO_0000131552" description="Small ribosomal subunit protein uS5">
    <location>
        <begin position="1"/>
        <end position="224"/>
    </location>
</feature>
<feature type="domain" description="S5 DRBM" evidence="1">
    <location>
        <begin position="44"/>
        <end position="107"/>
    </location>
</feature>
<feature type="region of interest" description="Disordered" evidence="2">
    <location>
        <begin position="1"/>
        <end position="40"/>
    </location>
</feature>
<feature type="compositionally biased region" description="Basic and acidic residues" evidence="2">
    <location>
        <begin position="13"/>
        <end position="40"/>
    </location>
</feature>
<dbReference type="EMBL" id="AE016958">
    <property type="protein sequence ID" value="AAS06734.1"/>
    <property type="molecule type" value="Genomic_DNA"/>
</dbReference>
<dbReference type="RefSeq" id="WP_003873495.1">
    <property type="nucleotide sequence ID" value="NZ_CP106873.1"/>
</dbReference>
<dbReference type="SMR" id="Q73S92"/>
<dbReference type="STRING" id="262316.MAP_4184"/>
<dbReference type="GeneID" id="75271962"/>
<dbReference type="KEGG" id="mpa:MAP_4184"/>
<dbReference type="eggNOG" id="COG0098">
    <property type="taxonomic scope" value="Bacteria"/>
</dbReference>
<dbReference type="HOGENOM" id="CLU_065898_1_1_11"/>
<dbReference type="Proteomes" id="UP000000580">
    <property type="component" value="Chromosome"/>
</dbReference>
<dbReference type="GO" id="GO:0015935">
    <property type="term" value="C:small ribosomal subunit"/>
    <property type="evidence" value="ECO:0007669"/>
    <property type="project" value="InterPro"/>
</dbReference>
<dbReference type="GO" id="GO:0019843">
    <property type="term" value="F:rRNA binding"/>
    <property type="evidence" value="ECO:0007669"/>
    <property type="project" value="UniProtKB-UniRule"/>
</dbReference>
<dbReference type="GO" id="GO:0003735">
    <property type="term" value="F:structural constituent of ribosome"/>
    <property type="evidence" value="ECO:0007669"/>
    <property type="project" value="InterPro"/>
</dbReference>
<dbReference type="GO" id="GO:0006412">
    <property type="term" value="P:translation"/>
    <property type="evidence" value="ECO:0007669"/>
    <property type="project" value="UniProtKB-UniRule"/>
</dbReference>
<dbReference type="FunFam" id="3.30.160.20:FF:000001">
    <property type="entry name" value="30S ribosomal protein S5"/>
    <property type="match status" value="1"/>
</dbReference>
<dbReference type="FunFam" id="3.30.230.10:FF:000002">
    <property type="entry name" value="30S ribosomal protein S5"/>
    <property type="match status" value="1"/>
</dbReference>
<dbReference type="Gene3D" id="3.30.160.20">
    <property type="match status" value="1"/>
</dbReference>
<dbReference type="Gene3D" id="3.30.230.10">
    <property type="match status" value="1"/>
</dbReference>
<dbReference type="HAMAP" id="MF_01307_B">
    <property type="entry name" value="Ribosomal_uS5_B"/>
    <property type="match status" value="1"/>
</dbReference>
<dbReference type="InterPro" id="IPR020568">
    <property type="entry name" value="Ribosomal_Su5_D2-typ_SF"/>
</dbReference>
<dbReference type="InterPro" id="IPR000851">
    <property type="entry name" value="Ribosomal_uS5"/>
</dbReference>
<dbReference type="InterPro" id="IPR005712">
    <property type="entry name" value="Ribosomal_uS5_bac-type"/>
</dbReference>
<dbReference type="InterPro" id="IPR005324">
    <property type="entry name" value="Ribosomal_uS5_C"/>
</dbReference>
<dbReference type="InterPro" id="IPR013810">
    <property type="entry name" value="Ribosomal_uS5_N"/>
</dbReference>
<dbReference type="InterPro" id="IPR018192">
    <property type="entry name" value="Ribosomal_uS5_N_CS"/>
</dbReference>
<dbReference type="InterPro" id="IPR014721">
    <property type="entry name" value="Ribsml_uS5_D2-typ_fold_subgr"/>
</dbReference>
<dbReference type="NCBIfam" id="TIGR01021">
    <property type="entry name" value="rpsE_bact"/>
    <property type="match status" value="1"/>
</dbReference>
<dbReference type="PANTHER" id="PTHR48277">
    <property type="entry name" value="MITOCHONDRIAL RIBOSOMAL PROTEIN S5"/>
    <property type="match status" value="1"/>
</dbReference>
<dbReference type="PANTHER" id="PTHR48277:SF1">
    <property type="entry name" value="MITOCHONDRIAL RIBOSOMAL PROTEIN S5"/>
    <property type="match status" value="1"/>
</dbReference>
<dbReference type="Pfam" id="PF00333">
    <property type="entry name" value="Ribosomal_S5"/>
    <property type="match status" value="1"/>
</dbReference>
<dbReference type="Pfam" id="PF03719">
    <property type="entry name" value="Ribosomal_S5_C"/>
    <property type="match status" value="1"/>
</dbReference>
<dbReference type="SUPFAM" id="SSF54768">
    <property type="entry name" value="dsRNA-binding domain-like"/>
    <property type="match status" value="1"/>
</dbReference>
<dbReference type="SUPFAM" id="SSF54211">
    <property type="entry name" value="Ribosomal protein S5 domain 2-like"/>
    <property type="match status" value="1"/>
</dbReference>
<dbReference type="PROSITE" id="PS00585">
    <property type="entry name" value="RIBOSOMAL_S5"/>
    <property type="match status" value="1"/>
</dbReference>
<dbReference type="PROSITE" id="PS50881">
    <property type="entry name" value="S5_DSRBD"/>
    <property type="match status" value="1"/>
</dbReference>
<proteinExistence type="inferred from homology"/>
<reference key="1">
    <citation type="journal article" date="2005" name="Proc. Natl. Acad. Sci. U.S.A.">
        <title>The complete genome sequence of Mycobacterium avium subspecies paratuberculosis.</title>
        <authorList>
            <person name="Li L."/>
            <person name="Bannantine J.P."/>
            <person name="Zhang Q."/>
            <person name="Amonsin A."/>
            <person name="May B.J."/>
            <person name="Alt D."/>
            <person name="Banerji N."/>
            <person name="Kanjilal S."/>
            <person name="Kapur V."/>
        </authorList>
    </citation>
    <scope>NUCLEOTIDE SEQUENCE [LARGE SCALE GENOMIC DNA]</scope>
    <source>
        <strain>ATCC BAA-968 / K-10</strain>
    </source>
</reference>
<evidence type="ECO:0000255" key="1">
    <source>
        <dbReference type="HAMAP-Rule" id="MF_01307"/>
    </source>
</evidence>
<evidence type="ECO:0000256" key="2">
    <source>
        <dbReference type="SAM" id="MobiDB-lite"/>
    </source>
</evidence>
<evidence type="ECO:0000305" key="3"/>
<protein>
    <recommendedName>
        <fullName evidence="1">Small ribosomal subunit protein uS5</fullName>
    </recommendedName>
    <alternativeName>
        <fullName evidence="3">30S ribosomal protein S5</fullName>
    </alternativeName>
</protein>
<comment type="function">
    <text evidence="1">With S4 and S12 plays an important role in translational accuracy.</text>
</comment>
<comment type="function">
    <text evidence="1">Located at the back of the 30S subunit body where it stabilizes the conformation of the head with respect to the body.</text>
</comment>
<comment type="subunit">
    <text evidence="1">Part of the 30S ribosomal subunit. Contacts proteins S4 and S8.</text>
</comment>
<comment type="domain">
    <text>The N-terminal domain interacts with the head of the 30S subunit; the C-terminal domain interacts with the body and contacts protein S4. The interaction surface between S4 and S5 is involved in control of translational fidelity.</text>
</comment>
<comment type="similarity">
    <text evidence="1">Belongs to the universal ribosomal protein uS5 family.</text>
</comment>
<accession>Q73S92</accession>
<sequence length="224" mass="22932">MAEQPAGGQGAGDSRDSRGDRDSRGRRGDGGRGGRDRDGDKSNYLERVVAINRVSKVVKGGRRFSFTALVIVGDGNGMVGVGYGKAKEVPAAIAKGVEEARKGFFRVPLIRGTITHPVQGEAAAGVVLLRPASPGTGVIAGGAARAVLECAGVHDILAKSLGSDNAINVVHATVAALKLLQRPEEVAARRGLPIEDVAPAGMLKARRESDALASAAAAREAAAQ</sequence>
<organism>
    <name type="scientific">Mycolicibacterium paratuberculosis (strain ATCC BAA-968 / K-10)</name>
    <name type="common">Mycobacterium paratuberculosis</name>
    <dbReference type="NCBI Taxonomy" id="262316"/>
    <lineage>
        <taxon>Bacteria</taxon>
        <taxon>Bacillati</taxon>
        <taxon>Actinomycetota</taxon>
        <taxon>Actinomycetes</taxon>
        <taxon>Mycobacteriales</taxon>
        <taxon>Mycobacteriaceae</taxon>
        <taxon>Mycobacterium</taxon>
        <taxon>Mycobacterium avium complex (MAC)</taxon>
    </lineage>
</organism>
<gene>
    <name evidence="1" type="primary">rpsE</name>
    <name type="ordered locus">MAP_4184</name>
</gene>